<accession>Q2RNA8</accession>
<keyword id="KW-0028">Amino-acid biosynthesis</keyword>
<keyword id="KW-0067">ATP-binding</keyword>
<keyword id="KW-0963">Cytoplasm</keyword>
<keyword id="KW-0368">Histidine biosynthesis</keyword>
<keyword id="KW-0378">Hydrolase</keyword>
<keyword id="KW-0547">Nucleotide-binding</keyword>
<keyword id="KW-1185">Reference proteome</keyword>
<name>HIS2_RHORT</name>
<comment type="catalytic activity">
    <reaction evidence="1">
        <text>1-(5-phospho-beta-D-ribosyl)-ATP + H2O = 1-(5-phospho-beta-D-ribosyl)-5'-AMP + diphosphate + H(+)</text>
        <dbReference type="Rhea" id="RHEA:22828"/>
        <dbReference type="ChEBI" id="CHEBI:15377"/>
        <dbReference type="ChEBI" id="CHEBI:15378"/>
        <dbReference type="ChEBI" id="CHEBI:33019"/>
        <dbReference type="ChEBI" id="CHEBI:59457"/>
        <dbReference type="ChEBI" id="CHEBI:73183"/>
        <dbReference type="EC" id="3.6.1.31"/>
    </reaction>
</comment>
<comment type="pathway">
    <text evidence="1">Amino-acid biosynthesis; L-histidine biosynthesis; L-histidine from 5-phospho-alpha-D-ribose 1-diphosphate: step 2/9.</text>
</comment>
<comment type="subcellular location">
    <subcellularLocation>
        <location evidence="1">Cytoplasm</location>
    </subcellularLocation>
</comment>
<comment type="similarity">
    <text evidence="1">Belongs to the PRA-PH family.</text>
</comment>
<organism>
    <name type="scientific">Rhodospirillum rubrum (strain ATCC 11170 / ATH 1.1.1 / DSM 467 / LMG 4362 / NCIMB 8255 / S1)</name>
    <dbReference type="NCBI Taxonomy" id="269796"/>
    <lineage>
        <taxon>Bacteria</taxon>
        <taxon>Pseudomonadati</taxon>
        <taxon>Pseudomonadota</taxon>
        <taxon>Alphaproteobacteria</taxon>
        <taxon>Rhodospirillales</taxon>
        <taxon>Rhodospirillaceae</taxon>
        <taxon>Rhodospirillum</taxon>
    </lineage>
</organism>
<dbReference type="EC" id="3.6.1.31" evidence="1"/>
<dbReference type="EMBL" id="CP000230">
    <property type="protein sequence ID" value="ABC24387.1"/>
    <property type="molecule type" value="Genomic_DNA"/>
</dbReference>
<dbReference type="RefSeq" id="WP_011391340.1">
    <property type="nucleotide sequence ID" value="NC_007643.1"/>
</dbReference>
<dbReference type="RefSeq" id="YP_428674.1">
    <property type="nucleotide sequence ID" value="NC_007643.1"/>
</dbReference>
<dbReference type="SMR" id="Q2RNA8"/>
<dbReference type="STRING" id="269796.Rru_A3593"/>
<dbReference type="EnsemblBacteria" id="ABC24387">
    <property type="protein sequence ID" value="ABC24387"/>
    <property type="gene ID" value="Rru_A3593"/>
</dbReference>
<dbReference type="KEGG" id="rru:Rru_A3593"/>
<dbReference type="PATRIC" id="fig|269796.9.peg.3714"/>
<dbReference type="eggNOG" id="COG0140">
    <property type="taxonomic scope" value="Bacteria"/>
</dbReference>
<dbReference type="HOGENOM" id="CLU_123337_1_2_5"/>
<dbReference type="PhylomeDB" id="Q2RNA8"/>
<dbReference type="UniPathway" id="UPA00031">
    <property type="reaction ID" value="UER00007"/>
</dbReference>
<dbReference type="Proteomes" id="UP000001929">
    <property type="component" value="Chromosome"/>
</dbReference>
<dbReference type="GO" id="GO:0005737">
    <property type="term" value="C:cytoplasm"/>
    <property type="evidence" value="ECO:0007669"/>
    <property type="project" value="UniProtKB-SubCell"/>
</dbReference>
<dbReference type="GO" id="GO:0005524">
    <property type="term" value="F:ATP binding"/>
    <property type="evidence" value="ECO:0007669"/>
    <property type="project" value="UniProtKB-KW"/>
</dbReference>
<dbReference type="GO" id="GO:0004636">
    <property type="term" value="F:phosphoribosyl-ATP diphosphatase activity"/>
    <property type="evidence" value="ECO:0007669"/>
    <property type="project" value="UniProtKB-UniRule"/>
</dbReference>
<dbReference type="GO" id="GO:0000105">
    <property type="term" value="P:L-histidine biosynthetic process"/>
    <property type="evidence" value="ECO:0007669"/>
    <property type="project" value="UniProtKB-UniRule"/>
</dbReference>
<dbReference type="CDD" id="cd11534">
    <property type="entry name" value="NTP-PPase_HisIE_like"/>
    <property type="match status" value="1"/>
</dbReference>
<dbReference type="Gene3D" id="1.10.287.1080">
    <property type="entry name" value="MazG-like"/>
    <property type="match status" value="1"/>
</dbReference>
<dbReference type="HAMAP" id="MF_01020">
    <property type="entry name" value="HisE"/>
    <property type="match status" value="1"/>
</dbReference>
<dbReference type="InterPro" id="IPR008179">
    <property type="entry name" value="HisE"/>
</dbReference>
<dbReference type="InterPro" id="IPR021130">
    <property type="entry name" value="PRib-ATP_PPHydrolase-like"/>
</dbReference>
<dbReference type="NCBIfam" id="TIGR03188">
    <property type="entry name" value="histidine_hisI"/>
    <property type="match status" value="1"/>
</dbReference>
<dbReference type="NCBIfam" id="NF001611">
    <property type="entry name" value="PRK00400.1-3"/>
    <property type="match status" value="1"/>
</dbReference>
<dbReference type="NCBIfam" id="NF001613">
    <property type="entry name" value="PRK00400.1-5"/>
    <property type="match status" value="1"/>
</dbReference>
<dbReference type="PANTHER" id="PTHR42945">
    <property type="entry name" value="HISTIDINE BIOSYNTHESIS BIFUNCTIONAL PROTEIN"/>
    <property type="match status" value="1"/>
</dbReference>
<dbReference type="PANTHER" id="PTHR42945:SF1">
    <property type="entry name" value="HISTIDINE BIOSYNTHESIS BIFUNCTIONAL PROTEIN HIS7"/>
    <property type="match status" value="1"/>
</dbReference>
<dbReference type="Pfam" id="PF01503">
    <property type="entry name" value="PRA-PH"/>
    <property type="match status" value="1"/>
</dbReference>
<dbReference type="SUPFAM" id="SSF101386">
    <property type="entry name" value="all-alpha NTP pyrophosphatases"/>
    <property type="match status" value="1"/>
</dbReference>
<gene>
    <name evidence="1" type="primary">hisE</name>
    <name type="ordered locus">Rru_A3593</name>
</gene>
<proteinExistence type="inferred from homology"/>
<sequence length="117" mass="12431">MTDIPPAVSPPPGPEIIDALAAVIASRQGADPATSYTAKLFGRGRGKIVQKFGEEAFEVGVAALVESPEQVVAESADVLYHLMVLWADVGVTPDRVWAELARRFGTSGIDEKAARKK</sequence>
<evidence type="ECO:0000255" key="1">
    <source>
        <dbReference type="HAMAP-Rule" id="MF_01020"/>
    </source>
</evidence>
<protein>
    <recommendedName>
        <fullName evidence="1">Phosphoribosyl-ATP pyrophosphatase</fullName>
        <shortName evidence="1">PRA-PH</shortName>
        <ecNumber evidence="1">3.6.1.31</ecNumber>
    </recommendedName>
</protein>
<reference key="1">
    <citation type="journal article" date="2011" name="Stand. Genomic Sci.">
        <title>Complete genome sequence of Rhodospirillum rubrum type strain (S1).</title>
        <authorList>
            <person name="Munk A.C."/>
            <person name="Copeland A."/>
            <person name="Lucas S."/>
            <person name="Lapidus A."/>
            <person name="Del Rio T.G."/>
            <person name="Barry K."/>
            <person name="Detter J.C."/>
            <person name="Hammon N."/>
            <person name="Israni S."/>
            <person name="Pitluck S."/>
            <person name="Brettin T."/>
            <person name="Bruce D."/>
            <person name="Han C."/>
            <person name="Tapia R."/>
            <person name="Gilna P."/>
            <person name="Schmutz J."/>
            <person name="Larimer F."/>
            <person name="Land M."/>
            <person name="Kyrpides N.C."/>
            <person name="Mavromatis K."/>
            <person name="Richardson P."/>
            <person name="Rohde M."/>
            <person name="Goeker M."/>
            <person name="Klenk H.P."/>
            <person name="Zhang Y."/>
            <person name="Roberts G.P."/>
            <person name="Reslewic S."/>
            <person name="Schwartz D.C."/>
        </authorList>
    </citation>
    <scope>NUCLEOTIDE SEQUENCE [LARGE SCALE GENOMIC DNA]</scope>
    <source>
        <strain>ATCC 11170 / ATH 1.1.1 / DSM 467 / LMG 4362 / NCIMB 8255 / S1</strain>
    </source>
</reference>
<feature type="chain" id="PRO_0000230190" description="Phosphoribosyl-ATP pyrophosphatase">
    <location>
        <begin position="1"/>
        <end position="117"/>
    </location>
</feature>